<organism>
    <name type="scientific">Bacillus subtilis (strain 168)</name>
    <dbReference type="NCBI Taxonomy" id="224308"/>
    <lineage>
        <taxon>Bacteria</taxon>
        <taxon>Bacillati</taxon>
        <taxon>Bacillota</taxon>
        <taxon>Bacilli</taxon>
        <taxon>Bacillales</taxon>
        <taxon>Bacillaceae</taxon>
        <taxon>Bacillus</taxon>
    </lineage>
</organism>
<accession>O07594</accession>
<feature type="chain" id="PRO_0000110245" description="Uncharacterized MscS family protein YhdY">
    <location>
        <begin position="1"/>
        <end position="371"/>
    </location>
</feature>
<feature type="transmembrane region" description="Helical" evidence="1">
    <location>
        <begin position="9"/>
        <end position="29"/>
    </location>
</feature>
<feature type="transmembrane region" description="Helical" evidence="1">
    <location>
        <begin position="58"/>
        <end position="78"/>
    </location>
</feature>
<feature type="transmembrane region" description="Helical" evidence="1">
    <location>
        <begin position="98"/>
        <end position="118"/>
    </location>
</feature>
<feature type="transmembrane region" description="Helical" evidence="1">
    <location>
        <begin position="133"/>
        <end position="153"/>
    </location>
</feature>
<feature type="transmembrane region" description="Helical" evidence="1">
    <location>
        <begin position="159"/>
        <end position="179"/>
    </location>
</feature>
<feature type="transmembrane region" description="Helical" evidence="1">
    <location>
        <begin position="183"/>
        <end position="203"/>
    </location>
</feature>
<feature type="transmembrane region" description="Helical" evidence="1">
    <location>
        <begin position="330"/>
        <end position="350"/>
    </location>
</feature>
<name>YHDY_BACSU</name>
<reference key="1">
    <citation type="journal article" date="1998" name="Microbiology">
        <title>The 172 kb prkA-addAB region from 83 degrees to 97 degrees of the Bacillus subtilis chromosome contains several dysfunctional genes, the glyB marker, many genes encoding transporter proteins, and the ubiquitous hit gene.</title>
        <authorList>
            <person name="Noback M.A."/>
            <person name="Holsappel S."/>
            <person name="Kiewiet R."/>
            <person name="Terpstra P."/>
            <person name="Wambutt R."/>
            <person name="Wedler H."/>
            <person name="Venema G."/>
            <person name="Bron S."/>
        </authorList>
    </citation>
    <scope>NUCLEOTIDE SEQUENCE [GENOMIC DNA]</scope>
    <source>
        <strain>168</strain>
    </source>
</reference>
<reference key="2">
    <citation type="journal article" date="1997" name="Nature">
        <title>The complete genome sequence of the Gram-positive bacterium Bacillus subtilis.</title>
        <authorList>
            <person name="Kunst F."/>
            <person name="Ogasawara N."/>
            <person name="Moszer I."/>
            <person name="Albertini A.M."/>
            <person name="Alloni G."/>
            <person name="Azevedo V."/>
            <person name="Bertero M.G."/>
            <person name="Bessieres P."/>
            <person name="Bolotin A."/>
            <person name="Borchert S."/>
            <person name="Borriss R."/>
            <person name="Boursier L."/>
            <person name="Brans A."/>
            <person name="Braun M."/>
            <person name="Brignell S.C."/>
            <person name="Bron S."/>
            <person name="Brouillet S."/>
            <person name="Bruschi C.V."/>
            <person name="Caldwell B."/>
            <person name="Capuano V."/>
            <person name="Carter N.M."/>
            <person name="Choi S.-K."/>
            <person name="Codani J.-J."/>
            <person name="Connerton I.F."/>
            <person name="Cummings N.J."/>
            <person name="Daniel R.A."/>
            <person name="Denizot F."/>
            <person name="Devine K.M."/>
            <person name="Duesterhoeft A."/>
            <person name="Ehrlich S.D."/>
            <person name="Emmerson P.T."/>
            <person name="Entian K.-D."/>
            <person name="Errington J."/>
            <person name="Fabret C."/>
            <person name="Ferrari E."/>
            <person name="Foulger D."/>
            <person name="Fritz C."/>
            <person name="Fujita M."/>
            <person name="Fujita Y."/>
            <person name="Fuma S."/>
            <person name="Galizzi A."/>
            <person name="Galleron N."/>
            <person name="Ghim S.-Y."/>
            <person name="Glaser P."/>
            <person name="Goffeau A."/>
            <person name="Golightly E.J."/>
            <person name="Grandi G."/>
            <person name="Guiseppi G."/>
            <person name="Guy B.J."/>
            <person name="Haga K."/>
            <person name="Haiech J."/>
            <person name="Harwood C.R."/>
            <person name="Henaut A."/>
            <person name="Hilbert H."/>
            <person name="Holsappel S."/>
            <person name="Hosono S."/>
            <person name="Hullo M.-F."/>
            <person name="Itaya M."/>
            <person name="Jones L.-M."/>
            <person name="Joris B."/>
            <person name="Karamata D."/>
            <person name="Kasahara Y."/>
            <person name="Klaerr-Blanchard M."/>
            <person name="Klein C."/>
            <person name="Kobayashi Y."/>
            <person name="Koetter P."/>
            <person name="Koningstein G."/>
            <person name="Krogh S."/>
            <person name="Kumano M."/>
            <person name="Kurita K."/>
            <person name="Lapidus A."/>
            <person name="Lardinois S."/>
            <person name="Lauber J."/>
            <person name="Lazarevic V."/>
            <person name="Lee S.-M."/>
            <person name="Levine A."/>
            <person name="Liu H."/>
            <person name="Masuda S."/>
            <person name="Mauel C."/>
            <person name="Medigue C."/>
            <person name="Medina N."/>
            <person name="Mellado R.P."/>
            <person name="Mizuno M."/>
            <person name="Moestl D."/>
            <person name="Nakai S."/>
            <person name="Noback M."/>
            <person name="Noone D."/>
            <person name="O'Reilly M."/>
            <person name="Ogawa K."/>
            <person name="Ogiwara A."/>
            <person name="Oudega B."/>
            <person name="Park S.-H."/>
            <person name="Parro V."/>
            <person name="Pohl T.M."/>
            <person name="Portetelle D."/>
            <person name="Porwollik S."/>
            <person name="Prescott A.M."/>
            <person name="Presecan E."/>
            <person name="Pujic P."/>
            <person name="Purnelle B."/>
            <person name="Rapoport G."/>
            <person name="Rey M."/>
            <person name="Reynolds S."/>
            <person name="Rieger M."/>
            <person name="Rivolta C."/>
            <person name="Rocha E."/>
            <person name="Roche B."/>
            <person name="Rose M."/>
            <person name="Sadaie Y."/>
            <person name="Sato T."/>
            <person name="Scanlan E."/>
            <person name="Schleich S."/>
            <person name="Schroeter R."/>
            <person name="Scoffone F."/>
            <person name="Sekiguchi J."/>
            <person name="Sekowska A."/>
            <person name="Seror S.J."/>
            <person name="Serror P."/>
            <person name="Shin B.-S."/>
            <person name="Soldo B."/>
            <person name="Sorokin A."/>
            <person name="Tacconi E."/>
            <person name="Takagi T."/>
            <person name="Takahashi H."/>
            <person name="Takemaru K."/>
            <person name="Takeuchi M."/>
            <person name="Tamakoshi A."/>
            <person name="Tanaka T."/>
            <person name="Terpstra P."/>
            <person name="Tognoni A."/>
            <person name="Tosato V."/>
            <person name="Uchiyama S."/>
            <person name="Vandenbol M."/>
            <person name="Vannier F."/>
            <person name="Vassarotti A."/>
            <person name="Viari A."/>
            <person name="Wambutt R."/>
            <person name="Wedler E."/>
            <person name="Wedler H."/>
            <person name="Weitzenegger T."/>
            <person name="Winters P."/>
            <person name="Wipat A."/>
            <person name="Yamamoto H."/>
            <person name="Yamane K."/>
            <person name="Yasumoto K."/>
            <person name="Yata K."/>
            <person name="Yoshida K."/>
            <person name="Yoshikawa H.-F."/>
            <person name="Zumstein E."/>
            <person name="Yoshikawa H."/>
            <person name="Danchin A."/>
        </authorList>
    </citation>
    <scope>NUCLEOTIDE SEQUENCE [LARGE SCALE GENOMIC DNA]</scope>
    <source>
        <strain>168</strain>
    </source>
</reference>
<reference key="3">
    <citation type="journal article" date="2008" name="Appl. Environ. Microbiol.">
        <title>Responses of Bacillus subtilis to hypotonic challenges: physiological contributions of mechanosensitive channels to cellular survival.</title>
        <authorList>
            <person name="Hoffmann T."/>
            <person name="Boiangiu C."/>
            <person name="Moses S."/>
            <person name="Bremer E."/>
        </authorList>
    </citation>
    <scope>DISRUPTION PHENOTYPE</scope>
    <source>
        <strain>168 / JH642</strain>
    </source>
</reference>
<reference key="4">
    <citation type="journal article" date="2008" name="Arch. Microbiol.">
        <title>Growth, osmotic downshock resistance and differentiation of Bacillus subtilis strains lacking mechanosensitive channels.</title>
        <authorList>
            <person name="Wahome P.G."/>
            <person name="Setlow P."/>
        </authorList>
    </citation>
    <scope>FUNCTION</scope>
    <scope>DISRUPTION PHENOTYPE</scope>
    <source>
        <strain>168 / PS832</strain>
    </source>
</reference>
<keyword id="KW-1003">Cell membrane</keyword>
<keyword id="KW-0472">Membrane</keyword>
<keyword id="KW-1185">Reference proteome</keyword>
<keyword id="KW-0812">Transmembrane</keyword>
<keyword id="KW-1133">Transmembrane helix</keyword>
<proteinExistence type="inferred from homology"/>
<gene>
    <name type="primary">yhdY</name>
    <name type="ordered locus">BSU09640</name>
</gene>
<protein>
    <recommendedName>
        <fullName>Uncharacterized MscS family protein YhdY</fullName>
    </recommendedName>
</protein>
<dbReference type="EMBL" id="Y14082">
    <property type="protein sequence ID" value="CAA74509.1"/>
    <property type="molecule type" value="Genomic_DNA"/>
</dbReference>
<dbReference type="EMBL" id="AL009126">
    <property type="protein sequence ID" value="CAB12803.1"/>
    <property type="molecule type" value="Genomic_DNA"/>
</dbReference>
<dbReference type="PIR" id="G69827">
    <property type="entry name" value="G69827"/>
</dbReference>
<dbReference type="RefSeq" id="WP_003245529.1">
    <property type="nucleotide sequence ID" value="NZ_OZ025638.1"/>
</dbReference>
<dbReference type="SMR" id="O07594"/>
<dbReference type="FunCoup" id="O07594">
    <property type="interactions" value="248"/>
</dbReference>
<dbReference type="STRING" id="224308.BSU09640"/>
<dbReference type="PaxDb" id="224308-BSU09640"/>
<dbReference type="EnsemblBacteria" id="CAB12803">
    <property type="protein sequence ID" value="CAB12803"/>
    <property type="gene ID" value="BSU_09640"/>
</dbReference>
<dbReference type="GeneID" id="939285"/>
<dbReference type="KEGG" id="bsu:BSU09640"/>
<dbReference type="PATRIC" id="fig|224308.179.peg.1037"/>
<dbReference type="eggNOG" id="COG0668">
    <property type="taxonomic scope" value="Bacteria"/>
</dbReference>
<dbReference type="InParanoid" id="O07594"/>
<dbReference type="OrthoDB" id="9809206at2"/>
<dbReference type="PhylomeDB" id="O07594"/>
<dbReference type="BioCyc" id="BSUB:BSU09640-MONOMER"/>
<dbReference type="Proteomes" id="UP000001570">
    <property type="component" value="Chromosome"/>
</dbReference>
<dbReference type="GO" id="GO:0005886">
    <property type="term" value="C:plasma membrane"/>
    <property type="evidence" value="ECO:0007669"/>
    <property type="project" value="UniProtKB-SubCell"/>
</dbReference>
<dbReference type="GO" id="GO:0055085">
    <property type="term" value="P:transmembrane transport"/>
    <property type="evidence" value="ECO:0007669"/>
    <property type="project" value="InterPro"/>
</dbReference>
<dbReference type="Gene3D" id="1.10.287.1260">
    <property type="match status" value="1"/>
</dbReference>
<dbReference type="Gene3D" id="2.30.30.60">
    <property type="match status" value="1"/>
</dbReference>
<dbReference type="Gene3D" id="3.30.70.100">
    <property type="match status" value="1"/>
</dbReference>
<dbReference type="InterPro" id="IPR010920">
    <property type="entry name" value="LSM_dom_sf"/>
</dbReference>
<dbReference type="InterPro" id="IPR049142">
    <property type="entry name" value="MS_channel_1st"/>
</dbReference>
<dbReference type="InterPro" id="IPR049278">
    <property type="entry name" value="MS_channel_C"/>
</dbReference>
<dbReference type="InterPro" id="IPR023408">
    <property type="entry name" value="MscS_beta-dom_sf"/>
</dbReference>
<dbReference type="InterPro" id="IPR006685">
    <property type="entry name" value="MscS_channel_2nd"/>
</dbReference>
<dbReference type="InterPro" id="IPR011066">
    <property type="entry name" value="MscS_channel_C_sf"/>
</dbReference>
<dbReference type="InterPro" id="IPR006686">
    <property type="entry name" value="MscS_channel_CS"/>
</dbReference>
<dbReference type="InterPro" id="IPR011014">
    <property type="entry name" value="MscS_channel_TM-2"/>
</dbReference>
<dbReference type="InterPro" id="IPR045042">
    <property type="entry name" value="YnaI-like"/>
</dbReference>
<dbReference type="PANTHER" id="PTHR43634:SF2">
    <property type="entry name" value="LOW CONDUCTANCE MECHANOSENSITIVE CHANNEL YNAI"/>
    <property type="match status" value="1"/>
</dbReference>
<dbReference type="PANTHER" id="PTHR43634">
    <property type="entry name" value="OW CONDUCTANCE MECHANOSENSITIVE CHANNEL"/>
    <property type="match status" value="1"/>
</dbReference>
<dbReference type="Pfam" id="PF21088">
    <property type="entry name" value="MS_channel_1st"/>
    <property type="match status" value="1"/>
</dbReference>
<dbReference type="Pfam" id="PF00924">
    <property type="entry name" value="MS_channel_2nd"/>
    <property type="match status" value="1"/>
</dbReference>
<dbReference type="Pfam" id="PF21082">
    <property type="entry name" value="MS_channel_3rd"/>
    <property type="match status" value="1"/>
</dbReference>
<dbReference type="SUPFAM" id="SSF82689">
    <property type="entry name" value="Mechanosensitive channel protein MscS (YggB), C-terminal domain"/>
    <property type="match status" value="1"/>
</dbReference>
<dbReference type="SUPFAM" id="SSF82861">
    <property type="entry name" value="Mechanosensitive channel protein MscS (YggB), transmembrane region"/>
    <property type="match status" value="1"/>
</dbReference>
<dbReference type="SUPFAM" id="SSF50182">
    <property type="entry name" value="Sm-like ribonucleoproteins"/>
    <property type="match status" value="1"/>
</dbReference>
<dbReference type="PROSITE" id="PS01246">
    <property type="entry name" value="UPF0003"/>
    <property type="match status" value="1"/>
</dbReference>
<evidence type="ECO:0000255" key="1"/>
<evidence type="ECO:0000269" key="2">
    <source>
    </source>
</evidence>
<evidence type="ECO:0000269" key="3">
    <source>
    </source>
</evidence>
<evidence type="ECO:0000305" key="4"/>
<sequence>MPDYLQQYFTLDNIIQIGISLAILLVFLILRKLFTRYFFNLLFNLTNRPKTEIFKQVVLAFDKPARWFFVALGLFLAIRYSPFLDEQMPVISKIYRSLIVALLCWGLCNLTATSSFIFHKVNQRFELDMDDILAPFLSKLLRFVIIALSVSVIAQEFNYDVNGFVAGLGLGGLAFALAAKDTISNFFGGIIIITEKPFTIGDWVETSTVTGSVEDITFRSTRFRTAQGALVTVPNSTLSMEAITNWTRMTKRQITFSIHVSYATPIENLERSIHSLRTMLLEHEGVDNEIIMVNFDTFADSYYNLFFNFYTKTTVWAENLNIREDINYKIIEILGAEGVQFAYPGQMVVVKQKHESDQFQVNLNKEEKERA</sequence>
<comment type="function">
    <text evidence="2">May play a role in resistance to osmotic downshock.</text>
</comment>
<comment type="subcellular location">
    <subcellularLocation>
        <location evidence="4">Cell membrane</location>
        <topology evidence="4">Multi-pass membrane protein</topology>
    </subcellularLocation>
</comment>
<comment type="disruption phenotype">
    <text evidence="2 3">Cells lacking this gene grow normally in minimal medium or in high-osmolarity environments, and exhibit the same survival capacity as the wild-type strain upon a drastic osmotic downshift. They sporulate and germinate normally.</text>
</comment>
<comment type="similarity">
    <text evidence="4">Belongs to the MscS (TC 1.A.23) family.</text>
</comment>